<evidence type="ECO:0000250" key="1"/>
<evidence type="ECO:0000255" key="2">
    <source>
        <dbReference type="HAMAP-Rule" id="MF_01222"/>
    </source>
</evidence>
<protein>
    <recommendedName>
        <fullName evidence="2">Protein archease</fullName>
    </recommendedName>
</protein>
<accession>Q8TU10</accession>
<dbReference type="EMBL" id="AE010299">
    <property type="protein sequence ID" value="AAM03718.1"/>
    <property type="molecule type" value="Genomic_DNA"/>
</dbReference>
<dbReference type="RefSeq" id="WP_011020323.1">
    <property type="nucleotide sequence ID" value="NC_003552.1"/>
</dbReference>
<dbReference type="SMR" id="Q8TU10"/>
<dbReference type="FunCoup" id="Q8TU10">
    <property type="interactions" value="44"/>
</dbReference>
<dbReference type="STRING" id="188937.MA_0265"/>
<dbReference type="EnsemblBacteria" id="AAM03718">
    <property type="protein sequence ID" value="AAM03718"/>
    <property type="gene ID" value="MA_0265"/>
</dbReference>
<dbReference type="GeneID" id="1472157"/>
<dbReference type="KEGG" id="mac:MA_0265"/>
<dbReference type="HOGENOM" id="CLU_111362_3_0_2"/>
<dbReference type="InParanoid" id="Q8TU10"/>
<dbReference type="OrthoDB" id="8831at2157"/>
<dbReference type="PhylomeDB" id="Q8TU10"/>
<dbReference type="Proteomes" id="UP000002487">
    <property type="component" value="Chromosome"/>
</dbReference>
<dbReference type="GO" id="GO:0005509">
    <property type="term" value="F:calcium ion binding"/>
    <property type="evidence" value="ECO:0007669"/>
    <property type="project" value="UniProtKB-UniRule"/>
</dbReference>
<dbReference type="GO" id="GO:0006388">
    <property type="term" value="P:tRNA splicing, via endonucleolytic cleavage and ligation"/>
    <property type="evidence" value="ECO:0007669"/>
    <property type="project" value="UniProtKB-UniRule"/>
</dbReference>
<dbReference type="Gene3D" id="3.55.10.10">
    <property type="entry name" value="Archease domain"/>
    <property type="match status" value="1"/>
</dbReference>
<dbReference type="HAMAP" id="MF_01222">
    <property type="entry name" value="Archease_arch"/>
    <property type="match status" value="1"/>
</dbReference>
<dbReference type="InterPro" id="IPR002804">
    <property type="entry name" value="Archease"/>
</dbReference>
<dbReference type="InterPro" id="IPR022952">
    <property type="entry name" value="Archease_arc"/>
</dbReference>
<dbReference type="InterPro" id="IPR023572">
    <property type="entry name" value="Archease_dom"/>
</dbReference>
<dbReference type="InterPro" id="IPR036820">
    <property type="entry name" value="Archease_dom_sf"/>
</dbReference>
<dbReference type="NCBIfam" id="NF001617">
    <property type="entry name" value="PRK00407.1"/>
    <property type="match status" value="1"/>
</dbReference>
<dbReference type="PANTHER" id="PTHR12682">
    <property type="entry name" value="ARCHEASE"/>
    <property type="match status" value="1"/>
</dbReference>
<dbReference type="PANTHER" id="PTHR12682:SF11">
    <property type="entry name" value="PROTEIN ARCHEASE"/>
    <property type="match status" value="1"/>
</dbReference>
<dbReference type="Pfam" id="PF01951">
    <property type="entry name" value="Archease"/>
    <property type="match status" value="1"/>
</dbReference>
<dbReference type="SUPFAM" id="SSF69819">
    <property type="entry name" value="MTH1598-like"/>
    <property type="match status" value="1"/>
</dbReference>
<proteinExistence type="inferred from homology"/>
<reference key="1">
    <citation type="journal article" date="2002" name="Genome Res.">
        <title>The genome of Methanosarcina acetivorans reveals extensive metabolic and physiological diversity.</title>
        <authorList>
            <person name="Galagan J.E."/>
            <person name="Nusbaum C."/>
            <person name="Roy A."/>
            <person name="Endrizzi M.G."/>
            <person name="Macdonald P."/>
            <person name="FitzHugh W."/>
            <person name="Calvo S."/>
            <person name="Engels R."/>
            <person name="Smirnov S."/>
            <person name="Atnoor D."/>
            <person name="Brown A."/>
            <person name="Allen N."/>
            <person name="Naylor J."/>
            <person name="Stange-Thomann N."/>
            <person name="DeArellano K."/>
            <person name="Johnson R."/>
            <person name="Linton L."/>
            <person name="McEwan P."/>
            <person name="McKernan K."/>
            <person name="Talamas J."/>
            <person name="Tirrell A."/>
            <person name="Ye W."/>
            <person name="Zimmer A."/>
            <person name="Barber R.D."/>
            <person name="Cann I."/>
            <person name="Graham D.E."/>
            <person name="Grahame D.A."/>
            <person name="Guss A.M."/>
            <person name="Hedderich R."/>
            <person name="Ingram-Smith C."/>
            <person name="Kuettner H.C."/>
            <person name="Krzycki J.A."/>
            <person name="Leigh J.A."/>
            <person name="Li W."/>
            <person name="Liu J."/>
            <person name="Mukhopadhyay B."/>
            <person name="Reeve J.N."/>
            <person name="Smith K."/>
            <person name="Springer T.A."/>
            <person name="Umayam L.A."/>
            <person name="White O."/>
            <person name="White R.H."/>
            <person name="de Macario E.C."/>
            <person name="Ferry J.G."/>
            <person name="Jarrell K.F."/>
            <person name="Jing H."/>
            <person name="Macario A.J.L."/>
            <person name="Paulsen I.T."/>
            <person name="Pritchett M."/>
            <person name="Sowers K.R."/>
            <person name="Swanson R.V."/>
            <person name="Zinder S.H."/>
            <person name="Lander E."/>
            <person name="Metcalf W.W."/>
            <person name="Birren B."/>
        </authorList>
    </citation>
    <scope>NUCLEOTIDE SEQUENCE [LARGE SCALE GENOMIC DNA]</scope>
    <source>
        <strain>ATCC 35395 / DSM 2834 / JCM 12185 / C2A</strain>
    </source>
</reference>
<feature type="chain" id="PRO_0000068842" description="Protein archease">
    <location>
        <begin position="1"/>
        <end position="146"/>
    </location>
</feature>
<feature type="binding site" evidence="1">
    <location>
        <position position="16"/>
    </location>
    <ligand>
        <name>Ca(2+)</name>
        <dbReference type="ChEBI" id="CHEBI:29108"/>
    </ligand>
</feature>
<feature type="binding site" evidence="1">
    <location>
        <position position="145"/>
    </location>
    <ligand>
        <name>Ca(2+)</name>
        <dbReference type="ChEBI" id="CHEBI:29108"/>
    </ligand>
</feature>
<feature type="binding site" evidence="1">
    <location>
        <position position="146"/>
    </location>
    <ligand>
        <name>Ca(2+)</name>
        <dbReference type="ChEBI" id="CHEBI:29108"/>
    </ligand>
</feature>
<sequence>MPSQGKKYEYLEHTADIKFLAYGNTLKEVFENAALAMFNVIIDTGKVSGETAREVCLTSPDLESLLVDWLSELLYLFEVDEIVFWKFRVEEIREEEGEYSIKAVASGEQYYPESHPFETEIKAVTYNQLELEKTADGWKAQVVVDI</sequence>
<organism>
    <name type="scientific">Methanosarcina acetivorans (strain ATCC 35395 / DSM 2834 / JCM 12185 / C2A)</name>
    <dbReference type="NCBI Taxonomy" id="188937"/>
    <lineage>
        <taxon>Archaea</taxon>
        <taxon>Methanobacteriati</taxon>
        <taxon>Methanobacteriota</taxon>
        <taxon>Stenosarchaea group</taxon>
        <taxon>Methanomicrobia</taxon>
        <taxon>Methanosarcinales</taxon>
        <taxon>Methanosarcinaceae</taxon>
        <taxon>Methanosarcina</taxon>
    </lineage>
</organism>
<keyword id="KW-0106">Calcium</keyword>
<keyword id="KW-0479">Metal-binding</keyword>
<keyword id="KW-1185">Reference proteome</keyword>
<keyword id="KW-0819">tRNA processing</keyword>
<name>ARCH_METAC</name>
<gene>
    <name type="ordered locus">MA_0265</name>
</gene>
<comment type="function">
    <text evidence="1">Activates the tRNA-splicing ligase complex by facilitating the enzymatic turnover of catalytic subunit RtcB. Acts by promoting the guanylylation of RtcB, a key intermediate step in tRNA ligation. Can also alter the NTP specificity of RtcB such that ATP, dGTP or ITP is used efficiently (By similarity).</text>
</comment>
<comment type="similarity">
    <text evidence="2">Belongs to the archease family.</text>
</comment>